<keyword id="KW-0002">3D-structure</keyword>
<keyword id="KW-0106">Calcium</keyword>
<keyword id="KW-0903">Direct protein sequencing</keyword>
<keyword id="KW-0464">Manganese</keyword>
<keyword id="KW-0479">Metal-binding</keyword>
<keyword id="KW-0560">Oxidoreductase</keyword>
<keyword id="KW-0575">Peroxidase</keyword>
<reference key="1">
    <citation type="journal article" date="1996" name="J. Biol. Chem.">
        <title>Molecular cloning of manganese catalase from Lactobacillus plantarum.</title>
        <authorList>
            <person name="Igarashi T."/>
            <person name="Kono Y."/>
            <person name="Tanaka K."/>
        </authorList>
    </citation>
    <scope>NUCLEOTIDE SEQUENCE [GENOMIC DNA]</scope>
    <scope>PROTEIN SEQUENCE OF 1-32 AND 67-86</scope>
    <source>
        <strain>ATCC 14431 / CECT 221 / LMD 73.4 / T-1043-5</strain>
    </source>
</reference>
<reference evidence="6 7" key="2">
    <citation type="journal article" date="2001" name="Structure">
        <title>Crystal structure of manganese catalase from Lactobacillus plantarum.</title>
        <authorList>
            <person name="Barynin V.V."/>
            <person name="Whittaker M.M."/>
            <person name="Antonyuk S.V."/>
            <person name="Lamzin V.S."/>
            <person name="Harrison P.M."/>
            <person name="Artymiuk P.J."/>
            <person name="Whittaker J.W."/>
        </authorList>
    </citation>
    <scope>X-RAY CRYSTALLOGRAPHY (1.4 ANGSTROMS) IN COMPLEX WITH CA(2+) AND MN(3+)</scope>
    <scope>COFACTOR</scope>
    <scope>SUBUNIT</scope>
    <scope>DOMAIN</scope>
</reference>
<reference evidence="8" key="3">
    <citation type="journal article" date="2003" name="Eur. J. Biochem.">
        <title>Outer sphere mutagenesis of Lactobacillus plantarum manganese catalase disrupts the cluster core. Mechanistic implications.</title>
        <authorList>
            <person name="Whittaker M.M."/>
            <person name="Barynin V.V."/>
            <person name="Igarashi T."/>
            <person name="Whittaker J.W."/>
        </authorList>
    </citation>
    <scope>X-RAY CRYSTALLOGRAPHY (1.33 ANGSTROMS) IN COMPLEX WITH CA(2+) AND MN(3+)</scope>
    <scope>FUNCTION</scope>
    <scope>CATALYTIC ACTIVITY</scope>
    <scope>COFACTOR</scope>
    <scope>MUTAGENESIS OF TYR-42</scope>
    <source>
        <strain>ATCC 14431 / CECT 221 / LMD 73.4 / T-1043-5</strain>
    </source>
</reference>
<name>MCAT_LACPN</name>
<sequence length="266" mass="29743">MFKHTRKLQYNAKPDRSDPIMARRLQESLGGQWGETTGMMSYLSQGWASTGAEKYKDLLLDTGTEEMAHVEMISTMIGYLLEDAPFGPEDLKRDPSLATTMAGMDPEHSLVHGLNASLNNPNGAAWNAGYVTSSGNLVADMRFNVVRESEARLQVSRLYSMTEDEGVRDMLKFLLARETQHQLQFMKAQEELEEKYGIIVPGDMKEIEHSEFSHVLMNFSDGDGSKAFEGQVAKDGEKFTYQENPEAMGGIPHIKPGDPRLHNHQG</sequence>
<feature type="chain" id="PRO_0000096155" description="Manganese catalase">
    <location>
        <begin position="1"/>
        <end position="266"/>
    </location>
</feature>
<feature type="region of interest" description="Disordered" evidence="1">
    <location>
        <begin position="243"/>
        <end position="266"/>
    </location>
</feature>
<feature type="compositionally biased region" description="Basic and acidic residues" evidence="1">
    <location>
        <begin position="255"/>
        <end position="266"/>
    </location>
</feature>
<feature type="binding site" evidence="2 3 6 7 8">
    <location>
        <position position="35"/>
    </location>
    <ligand>
        <name>Mn(2+)</name>
        <dbReference type="ChEBI" id="CHEBI:29035"/>
        <label>1</label>
    </ligand>
</feature>
<feature type="binding site" evidence="2 3 6 7 8">
    <location>
        <position position="57"/>
    </location>
    <ligand>
        <name>Ca(2+)</name>
        <dbReference type="ChEBI" id="CHEBI:29108"/>
    </ligand>
</feature>
<feature type="binding site" evidence="2 3 6 7 8">
    <location>
        <position position="61"/>
    </location>
    <ligand>
        <name>Ca(2+)</name>
        <dbReference type="ChEBI" id="CHEBI:29108"/>
    </ligand>
</feature>
<feature type="binding site" evidence="2 3 6 7 8">
    <location>
        <position position="66"/>
    </location>
    <ligand>
        <name>Mn(2+)</name>
        <dbReference type="ChEBI" id="CHEBI:29035"/>
        <label>1</label>
    </ligand>
</feature>
<feature type="binding site" evidence="2 3 6 7 8">
    <location>
        <position position="66"/>
    </location>
    <ligand>
        <name>Mn(2+)</name>
        <dbReference type="ChEBI" id="CHEBI:29035"/>
        <label>2</label>
    </ligand>
</feature>
<feature type="binding site" evidence="2 3 6 7 8">
    <location>
        <position position="69"/>
    </location>
    <ligand>
        <name>Mn(2+)</name>
        <dbReference type="ChEBI" id="CHEBI:29035"/>
        <label>1</label>
    </ligand>
</feature>
<feature type="binding site" evidence="2 3 6 7 8">
    <location>
        <position position="148"/>
    </location>
    <ligand>
        <name>Mn(2+)</name>
        <dbReference type="ChEBI" id="CHEBI:29035"/>
        <label>2</label>
    </ligand>
</feature>
<feature type="binding site" evidence="2 3 6 7 8">
    <location>
        <position position="181"/>
    </location>
    <ligand>
        <name>Mn(2+)</name>
        <dbReference type="ChEBI" id="CHEBI:29035"/>
        <label>2</label>
    </ligand>
</feature>
<feature type="binding site" evidence="2 3 6 7 8">
    <location>
        <position position="218"/>
    </location>
    <ligand>
        <name>Ca(2+)</name>
        <dbReference type="ChEBI" id="CHEBI:29108"/>
    </ligand>
</feature>
<feature type="binding site" evidence="2 3 6 7 8">
    <location>
        <position position="220"/>
    </location>
    <ligand>
        <name>Ca(2+)</name>
        <dbReference type="ChEBI" id="CHEBI:29108"/>
    </ligand>
</feature>
<feature type="binding site" evidence="2 3 6 7 8">
    <location>
        <position position="222"/>
    </location>
    <ligand>
        <name>Ca(2+)</name>
        <dbReference type="ChEBI" id="CHEBI:29108"/>
    </ligand>
</feature>
<feature type="mutagenesis site" description="Loss of activity." evidence="3">
    <original>Y</original>
    <variation>F</variation>
    <location>
        <position position="42"/>
    </location>
</feature>
<feature type="strand" evidence="10">
    <location>
        <begin position="2"/>
        <end position="4"/>
    </location>
</feature>
<feature type="helix" evidence="10">
    <location>
        <begin position="19"/>
        <end position="30"/>
    </location>
</feature>
<feature type="helix" evidence="10">
    <location>
        <begin position="35"/>
        <end position="48"/>
    </location>
</feature>
<feature type="helix" evidence="10">
    <location>
        <begin position="53"/>
        <end position="80"/>
    </location>
</feature>
<feature type="turn" evidence="10">
    <location>
        <begin position="81"/>
        <end position="83"/>
    </location>
</feature>
<feature type="helix" evidence="10">
    <location>
        <begin position="88"/>
        <end position="93"/>
    </location>
</feature>
<feature type="helix" evidence="10">
    <location>
        <begin position="97"/>
        <end position="103"/>
    </location>
</feature>
<feature type="helix" evidence="10">
    <location>
        <begin position="106"/>
        <end position="110"/>
    </location>
</feature>
<feature type="strand" evidence="9">
    <location>
        <begin position="113"/>
        <end position="115"/>
    </location>
</feature>
<feature type="helix" evidence="10">
    <location>
        <begin position="128"/>
        <end position="130"/>
    </location>
</feature>
<feature type="helix" evidence="10">
    <location>
        <begin position="137"/>
        <end position="159"/>
    </location>
</feature>
<feature type="helix" evidence="10">
    <location>
        <begin position="165"/>
        <end position="196"/>
    </location>
</feature>
<feature type="strand" evidence="10">
    <location>
        <begin position="198"/>
        <end position="201"/>
    </location>
</feature>
<feature type="turn" evidence="10">
    <location>
        <begin position="205"/>
        <end position="207"/>
    </location>
</feature>
<feature type="helix" evidence="10">
    <location>
        <begin position="210"/>
        <end position="212"/>
    </location>
</feature>
<feature type="strand" evidence="10">
    <location>
        <begin position="215"/>
        <end position="217"/>
    </location>
</feature>
<feature type="helix" evidence="10">
    <location>
        <begin position="224"/>
        <end position="228"/>
    </location>
</feature>
<feature type="strand" evidence="10">
    <location>
        <begin position="240"/>
        <end position="244"/>
    </location>
</feature>
<feature type="helix" evidence="10">
    <location>
        <begin position="259"/>
        <end position="261"/>
    </location>
</feature>
<organism>
    <name type="scientific">Lactiplantibacillus plantarum</name>
    <name type="common">Lactobacillus plantarum</name>
    <dbReference type="NCBI Taxonomy" id="1590"/>
    <lineage>
        <taxon>Bacteria</taxon>
        <taxon>Bacillati</taxon>
        <taxon>Bacillota</taxon>
        <taxon>Bacilli</taxon>
        <taxon>Lactobacillales</taxon>
        <taxon>Lactobacillaceae</taxon>
        <taxon>Lactiplantibacillus</taxon>
    </lineage>
</organism>
<comment type="function">
    <text evidence="3">Catalyzes the decomposition of hydrogen peroxide into water and oxygen.</text>
</comment>
<comment type="catalytic activity">
    <reaction evidence="3">
        <text>2 H2O2 = O2 + 2 H2O</text>
        <dbReference type="Rhea" id="RHEA:20309"/>
        <dbReference type="ChEBI" id="CHEBI:15377"/>
        <dbReference type="ChEBI" id="CHEBI:15379"/>
        <dbReference type="ChEBI" id="CHEBI:16240"/>
        <dbReference type="EC" id="1.11.1.6"/>
    </reaction>
</comment>
<comment type="cofactor">
    <cofactor evidence="2 3">
        <name>Ca(2+)</name>
        <dbReference type="ChEBI" id="CHEBI:29108"/>
    </cofactor>
    <text evidence="2 3">Binds 1 Ca(2+) ion per subunit.</text>
</comment>
<comment type="cofactor">
    <cofactor evidence="2 3">
        <name>Mn(2+)</name>
        <dbReference type="ChEBI" id="CHEBI:29035"/>
    </cofactor>
    <text evidence="2 3">Binds 2 manganese ions per subunit.</text>
</comment>
<comment type="subunit">
    <text evidence="2">Homohexamer.</text>
</comment>
<comment type="domain">
    <text evidence="2">Each subunit is composed of three distinct structural regions: an N-terminal polypeptide, a central four-helix bundle that serves as the scaffolding for the catalytic active site, and a C-terminal tail.</text>
</comment>
<comment type="similarity">
    <text evidence="5">Belongs to the manganese catalase family.</text>
</comment>
<protein>
    <recommendedName>
        <fullName evidence="4">Manganese catalase</fullName>
        <ecNumber evidence="3">1.11.1.6</ecNumber>
    </recommendedName>
    <alternativeName>
        <fullName>Pseudocatalase</fullName>
    </alternativeName>
</protein>
<dbReference type="EC" id="1.11.1.6" evidence="3"/>
<dbReference type="EMBL" id="D87070">
    <property type="protein sequence ID" value="BAA13239.1"/>
    <property type="molecule type" value="Genomic_DNA"/>
</dbReference>
<dbReference type="PDB" id="1JKU">
    <property type="method" value="X-ray"/>
    <property type="resolution" value="1.84 A"/>
    <property type="chains" value="A/B/C/D/E/F=1-266"/>
</dbReference>
<dbReference type="PDB" id="1JKV">
    <property type="method" value="X-ray"/>
    <property type="resolution" value="1.39 A"/>
    <property type="chains" value="A/B/C/D/E/F=1-266"/>
</dbReference>
<dbReference type="PDB" id="1O9I">
    <property type="method" value="X-ray"/>
    <property type="resolution" value="1.33 A"/>
    <property type="chains" value="A/B/C/D/E/F=1-266"/>
</dbReference>
<dbReference type="PDBsum" id="1JKU"/>
<dbReference type="PDBsum" id="1JKV"/>
<dbReference type="PDBsum" id="1O9I"/>
<dbReference type="SMR" id="P60355"/>
<dbReference type="DrugBank" id="DB03814">
    <property type="generic name" value="2-(N-morpholino)ethanesulfonic acid"/>
</dbReference>
<dbReference type="PeroxiBase" id="3978">
    <property type="entry name" value="LplMnCat01"/>
</dbReference>
<dbReference type="EvolutionaryTrace" id="P60355"/>
<dbReference type="GO" id="GO:0004096">
    <property type="term" value="F:catalase activity"/>
    <property type="evidence" value="ECO:0007669"/>
    <property type="project" value="UniProtKB-EC"/>
</dbReference>
<dbReference type="GO" id="GO:0046872">
    <property type="term" value="F:metal ion binding"/>
    <property type="evidence" value="ECO:0007669"/>
    <property type="project" value="UniProtKB-KW"/>
</dbReference>
<dbReference type="CDD" id="cd01051">
    <property type="entry name" value="Mn_catalase"/>
    <property type="match status" value="1"/>
</dbReference>
<dbReference type="Gene3D" id="1.20.1260.10">
    <property type="match status" value="1"/>
</dbReference>
<dbReference type="Gene3D" id="3.30.1530.10">
    <property type="entry name" value="manganese catalase, domain 2, chain A"/>
    <property type="match status" value="1"/>
</dbReference>
<dbReference type="InterPro" id="IPR012347">
    <property type="entry name" value="Ferritin-like"/>
</dbReference>
<dbReference type="InterPro" id="IPR009078">
    <property type="entry name" value="Ferritin-like_SF"/>
</dbReference>
<dbReference type="InterPro" id="IPR007760">
    <property type="entry name" value="Mn_catalase"/>
</dbReference>
<dbReference type="InterPro" id="IPR027407">
    <property type="entry name" value="Mn_catalase_C"/>
</dbReference>
<dbReference type="InterPro" id="IPR039377">
    <property type="entry name" value="Mn_catalase_dom"/>
</dbReference>
<dbReference type="Pfam" id="PF05067">
    <property type="entry name" value="Mn_catalase"/>
    <property type="match status" value="1"/>
</dbReference>
<dbReference type="SUPFAM" id="SSF47240">
    <property type="entry name" value="Ferritin-like"/>
    <property type="match status" value="1"/>
</dbReference>
<evidence type="ECO:0000256" key="1">
    <source>
        <dbReference type="SAM" id="MobiDB-lite"/>
    </source>
</evidence>
<evidence type="ECO:0000269" key="2">
    <source>
    </source>
</evidence>
<evidence type="ECO:0000269" key="3">
    <source>
    </source>
</evidence>
<evidence type="ECO:0000303" key="4">
    <source>
    </source>
</evidence>
<evidence type="ECO:0000305" key="5"/>
<evidence type="ECO:0007744" key="6">
    <source>
        <dbReference type="PDB" id="1JKU"/>
    </source>
</evidence>
<evidence type="ECO:0007744" key="7">
    <source>
        <dbReference type="PDB" id="1JKV"/>
    </source>
</evidence>
<evidence type="ECO:0007744" key="8">
    <source>
        <dbReference type="PDB" id="1O9I"/>
    </source>
</evidence>
<evidence type="ECO:0007829" key="9">
    <source>
        <dbReference type="PDB" id="1JKU"/>
    </source>
</evidence>
<evidence type="ECO:0007829" key="10">
    <source>
        <dbReference type="PDB" id="1O9I"/>
    </source>
</evidence>
<proteinExistence type="evidence at protein level"/>
<accession>P60355</accession>